<keyword id="KW-0998">Cell outer membrane</keyword>
<keyword id="KW-0472">Membrane</keyword>
<keyword id="KW-0732">Signal</keyword>
<keyword id="KW-0843">Virulence</keyword>
<comment type="function">
    <text evidence="1">Virulence-associated protein essential for survival of the bacterium within the tick host and therefore within the natural life cycle of the spirochete.</text>
</comment>
<comment type="subcellular location">
    <subcellularLocation>
        <location evidence="3">Cell outer membrane</location>
    </subcellularLocation>
</comment>
<comment type="similarity">
    <text evidence="3">Belongs to the BptA family.</text>
</comment>
<proteinExistence type="inferred from homology"/>
<evidence type="ECO:0000250" key="1"/>
<evidence type="ECO:0000255" key="2"/>
<evidence type="ECO:0000305" key="3"/>
<feature type="signal peptide" evidence="2">
    <location>
        <begin position="1"/>
        <end position="19"/>
    </location>
</feature>
<feature type="chain" id="PRO_0000240475" description="Protein BptA">
    <location>
        <begin position="20"/>
        <end position="206"/>
    </location>
</feature>
<sequence length="206" mass="24543">MGKILFFGLLLICIFLGFFFYKQKENNIIYNRIVEKFEDNVVIDEIYTHLFKDSNLKELVFIKSQLIIPELEHKKMIKATGYRADAYKALSTVYRFDFKVHDNKILGFKSVIFEGFEDAKVSKHENNLPSEKWQQLKDFNIGDPNINEKFFHLEFPFVVKNTLCVTISKGFFKKIKKLKRLKIMLISNEDREYKIDIENFLPKYNL</sequence>
<gene>
    <name type="primary">bptA</name>
</gene>
<organism>
    <name type="scientific">Borreliella japonica</name>
    <name type="common">Borrelia japonica</name>
    <dbReference type="NCBI Taxonomy" id="34095"/>
    <lineage>
        <taxon>Bacteria</taxon>
        <taxon>Pseudomonadati</taxon>
        <taxon>Spirochaetota</taxon>
        <taxon>Spirochaetia</taxon>
        <taxon>Spirochaetales</taxon>
        <taxon>Borreliaceae</taxon>
        <taxon>Borreliella</taxon>
    </lineage>
</organism>
<protein>
    <recommendedName>
        <fullName>Protein BptA</fullName>
    </recommendedName>
    <alternativeName>
        <fullName>Borrelial persistence in ticks protein A</fullName>
    </alternativeName>
</protein>
<dbReference type="EMBL" id="AY894351">
    <property type="protein sequence ID" value="AAX69078.1"/>
    <property type="molecule type" value="Genomic_DNA"/>
</dbReference>
<dbReference type="SMR" id="Q56NG7"/>
<dbReference type="GO" id="GO:0009279">
    <property type="term" value="C:cell outer membrane"/>
    <property type="evidence" value="ECO:0007669"/>
    <property type="project" value="UniProtKB-SubCell"/>
</dbReference>
<dbReference type="InterPro" id="IPR031471">
    <property type="entry name" value="BptA"/>
</dbReference>
<dbReference type="NCBIfam" id="NF045772">
    <property type="entry name" value="VirAssocBptA"/>
    <property type="match status" value="1"/>
</dbReference>
<dbReference type="Pfam" id="PF17044">
    <property type="entry name" value="BPTA"/>
    <property type="match status" value="1"/>
</dbReference>
<reference key="1">
    <citation type="journal article" date="2005" name="Proc. Natl. Acad. Sci. U.S.A.">
        <title>bptA (bbe16) is essential for the persistence of the Lyme disease spirochete, Borrelia burgdorferi, in its natural tick vector.</title>
        <authorList>
            <person name="Revel A.T."/>
            <person name="Blevins J.S."/>
            <person name="Almazan C."/>
            <person name="Neil L."/>
            <person name="Kocan K.M."/>
            <person name="de la Fuente J."/>
            <person name="Hagman K.E."/>
            <person name="Norgard M.V."/>
        </authorList>
    </citation>
    <scope>NUCLEOTIDE SEQUENCE [GENOMIC DNA]</scope>
    <source>
        <strain>IKA2</strain>
    </source>
</reference>
<name>BPTA_BORJA</name>
<accession>Q56NG7</accession>